<feature type="chain" id="PRO_0000170302" description="Large ribosomal subunit protein bL33c">
    <location>
        <begin position="1"/>
        <end position="66"/>
    </location>
</feature>
<geneLocation type="chloroplast"/>
<gene>
    <name evidence="1" type="primary">rpl33</name>
</gene>
<sequence>MAKGKDVRIRVILECISCVRKGTNKESTGISRYSTQKNRHNTPGQLELRKFCRYCRKHTTHNEIKK</sequence>
<reference key="1">
    <citation type="journal article" date="2004" name="DNA Res.">
        <title>Complete nucleotide sequence of the sugarcane (Saccharum officinarum) chloroplast genome: a comparative analysis of four monocot chloroplast genomes.</title>
        <authorList>
            <person name="Asano T."/>
            <person name="Tsudzuki T."/>
            <person name="Takahashi S."/>
            <person name="Shimada H."/>
            <person name="Kadowaki K."/>
        </authorList>
    </citation>
    <scope>NUCLEOTIDE SEQUENCE [LARGE SCALE GENOMIC DNA]</scope>
</reference>
<organism>
    <name type="scientific">Saccharum officinarum</name>
    <name type="common">Sugarcane</name>
    <dbReference type="NCBI Taxonomy" id="4547"/>
    <lineage>
        <taxon>Eukaryota</taxon>
        <taxon>Viridiplantae</taxon>
        <taxon>Streptophyta</taxon>
        <taxon>Embryophyta</taxon>
        <taxon>Tracheophyta</taxon>
        <taxon>Spermatophyta</taxon>
        <taxon>Magnoliopsida</taxon>
        <taxon>Liliopsida</taxon>
        <taxon>Poales</taxon>
        <taxon>Poaceae</taxon>
        <taxon>PACMAD clade</taxon>
        <taxon>Panicoideae</taxon>
        <taxon>Andropogonodae</taxon>
        <taxon>Andropogoneae</taxon>
        <taxon>Saccharinae</taxon>
        <taxon>Saccharum</taxon>
        <taxon>Saccharum officinarum species complex</taxon>
    </lineage>
</organism>
<name>RK33_SACOF</name>
<accession>Q6ENU3</accession>
<proteinExistence type="inferred from homology"/>
<dbReference type="EMBL" id="AP006714">
    <property type="protein sequence ID" value="BAD27313.1"/>
    <property type="molecule type" value="Genomic_DNA"/>
</dbReference>
<dbReference type="RefSeq" id="YP_009389591.1">
    <property type="nucleotide sequence ID" value="NC_035224.1"/>
</dbReference>
<dbReference type="GeneID" id="33347808"/>
<dbReference type="GO" id="GO:0009507">
    <property type="term" value="C:chloroplast"/>
    <property type="evidence" value="ECO:0007669"/>
    <property type="project" value="UniProtKB-SubCell"/>
</dbReference>
<dbReference type="GO" id="GO:1990904">
    <property type="term" value="C:ribonucleoprotein complex"/>
    <property type="evidence" value="ECO:0007669"/>
    <property type="project" value="UniProtKB-KW"/>
</dbReference>
<dbReference type="GO" id="GO:0005840">
    <property type="term" value="C:ribosome"/>
    <property type="evidence" value="ECO:0007669"/>
    <property type="project" value="UniProtKB-KW"/>
</dbReference>
<dbReference type="GO" id="GO:0003735">
    <property type="term" value="F:structural constituent of ribosome"/>
    <property type="evidence" value="ECO:0007669"/>
    <property type="project" value="InterPro"/>
</dbReference>
<dbReference type="GO" id="GO:0006412">
    <property type="term" value="P:translation"/>
    <property type="evidence" value="ECO:0007669"/>
    <property type="project" value="UniProtKB-UniRule"/>
</dbReference>
<dbReference type="Gene3D" id="2.20.28.120">
    <property type="entry name" value="Ribosomal protein L33"/>
    <property type="match status" value="1"/>
</dbReference>
<dbReference type="HAMAP" id="MF_00294">
    <property type="entry name" value="Ribosomal_bL33"/>
    <property type="match status" value="1"/>
</dbReference>
<dbReference type="InterPro" id="IPR001705">
    <property type="entry name" value="Ribosomal_bL33"/>
</dbReference>
<dbReference type="InterPro" id="IPR018264">
    <property type="entry name" value="Ribosomal_bL33_CS"/>
</dbReference>
<dbReference type="InterPro" id="IPR038584">
    <property type="entry name" value="Ribosomal_bL33_sf"/>
</dbReference>
<dbReference type="InterPro" id="IPR011332">
    <property type="entry name" value="Ribosomal_zn-bd"/>
</dbReference>
<dbReference type="NCBIfam" id="NF001764">
    <property type="entry name" value="PRK00504.1"/>
    <property type="match status" value="1"/>
</dbReference>
<dbReference type="NCBIfam" id="NF001860">
    <property type="entry name" value="PRK00595.1"/>
    <property type="match status" value="1"/>
</dbReference>
<dbReference type="NCBIfam" id="TIGR01023">
    <property type="entry name" value="rpmG_bact"/>
    <property type="match status" value="1"/>
</dbReference>
<dbReference type="PANTHER" id="PTHR43168">
    <property type="entry name" value="50S RIBOSOMAL PROTEIN L33, CHLOROPLASTIC"/>
    <property type="match status" value="1"/>
</dbReference>
<dbReference type="PANTHER" id="PTHR43168:SF2">
    <property type="entry name" value="LARGE RIBOSOMAL SUBUNIT PROTEIN BL33C"/>
    <property type="match status" value="1"/>
</dbReference>
<dbReference type="Pfam" id="PF00471">
    <property type="entry name" value="Ribosomal_L33"/>
    <property type="match status" value="1"/>
</dbReference>
<dbReference type="SUPFAM" id="SSF57829">
    <property type="entry name" value="Zn-binding ribosomal proteins"/>
    <property type="match status" value="1"/>
</dbReference>
<dbReference type="PROSITE" id="PS00582">
    <property type="entry name" value="RIBOSOMAL_L33"/>
    <property type="match status" value="1"/>
</dbReference>
<keyword id="KW-0150">Chloroplast</keyword>
<keyword id="KW-0934">Plastid</keyword>
<keyword id="KW-0687">Ribonucleoprotein</keyword>
<keyword id="KW-0689">Ribosomal protein</keyword>
<comment type="subcellular location">
    <subcellularLocation>
        <location>Plastid</location>
        <location>Chloroplast</location>
    </subcellularLocation>
</comment>
<comment type="similarity">
    <text evidence="1">Belongs to the bacterial ribosomal protein bL33 family.</text>
</comment>
<protein>
    <recommendedName>
        <fullName evidence="1">Large ribosomal subunit protein bL33c</fullName>
    </recommendedName>
    <alternativeName>
        <fullName evidence="2">50S ribosomal protein L33, chloroplastic</fullName>
    </alternativeName>
</protein>
<evidence type="ECO:0000255" key="1">
    <source>
        <dbReference type="HAMAP-Rule" id="MF_00294"/>
    </source>
</evidence>
<evidence type="ECO:0000305" key="2"/>